<sequence length="370" mass="39128">MALLSAAPRALRLPRRLPLGAALPALRALATPAAAQKVPVSLIAALRKQHPVPLAQAREALERSGLDLAAALDYLRTSTSASAEKKAAKVSGRDTNEGLIAISLLGGKRVGMIHLACETDFVARNQVFLDTARGVAETTAFLDVPGDHEKPQIASSPYAFDPILDFPTESLLSAPLISLPAADTADGSLSPLPTSEPTTIKQSLLSSLAQTGENLKLLRAVSFAAPFPSTPDVRFVPGGYAHGGITDKEGKVGGIVVLSVTSADPEKPIASIIHGPGGDDLEKAAESLARTVARQVVGFPTKVIDRGDRAVDDEEVLMEQPFMMFNGDSRSVKDVLAEWGKERGVVLRVVGMRRWAVGDEIEIKEKETDA</sequence>
<protein>
    <recommendedName>
        <fullName evidence="1">Elongation factor Ts, mitochondrial</fullName>
        <shortName evidence="1">EF-Ts</shortName>
        <shortName evidence="1">EF-TsMt</shortName>
    </recommendedName>
</protein>
<accession>P0CN38</accession>
<accession>Q55VU4</accession>
<accession>Q5KKE5</accession>
<dbReference type="EMBL" id="AE017343">
    <property type="protein sequence ID" value="AAW42347.1"/>
    <property type="molecule type" value="Genomic_DNA"/>
</dbReference>
<dbReference type="RefSeq" id="XP_569654.1">
    <property type="nucleotide sequence ID" value="XM_569654.1"/>
</dbReference>
<dbReference type="SMR" id="P0CN38"/>
<dbReference type="STRING" id="214684.P0CN38"/>
<dbReference type="PaxDb" id="214684-P0CN38"/>
<dbReference type="EnsemblFungi" id="AAW42347">
    <property type="protein sequence ID" value="AAW42347"/>
    <property type="gene ID" value="CNC03280"/>
</dbReference>
<dbReference type="GeneID" id="3256685"/>
<dbReference type="KEGG" id="cne:CNC03280"/>
<dbReference type="VEuPathDB" id="FungiDB:CNC03280"/>
<dbReference type="eggNOG" id="KOG1071">
    <property type="taxonomic scope" value="Eukaryota"/>
</dbReference>
<dbReference type="HOGENOM" id="CLU_047155_4_1_1"/>
<dbReference type="InParanoid" id="P0CN38"/>
<dbReference type="OMA" id="FAKWTVG"/>
<dbReference type="OrthoDB" id="277235at2759"/>
<dbReference type="Proteomes" id="UP000002149">
    <property type="component" value="Chromosome 3"/>
</dbReference>
<dbReference type="GO" id="GO:0005739">
    <property type="term" value="C:mitochondrion"/>
    <property type="evidence" value="ECO:0007669"/>
    <property type="project" value="UniProtKB-SubCell"/>
</dbReference>
<dbReference type="GO" id="GO:0003746">
    <property type="term" value="F:translation elongation factor activity"/>
    <property type="evidence" value="ECO:0000318"/>
    <property type="project" value="GO_Central"/>
</dbReference>
<dbReference type="GO" id="GO:0070125">
    <property type="term" value="P:mitochondrial translational elongation"/>
    <property type="evidence" value="ECO:0000318"/>
    <property type="project" value="GO_Central"/>
</dbReference>
<dbReference type="Gene3D" id="1.10.8.10">
    <property type="entry name" value="DNA helicase RuvA subunit, C-terminal domain"/>
    <property type="match status" value="1"/>
</dbReference>
<dbReference type="Gene3D" id="3.30.479.20">
    <property type="entry name" value="Elongation factor Ts, dimerisation domain"/>
    <property type="match status" value="2"/>
</dbReference>
<dbReference type="HAMAP" id="MF_00050">
    <property type="entry name" value="EF_Ts"/>
    <property type="match status" value="1"/>
</dbReference>
<dbReference type="InterPro" id="IPR036402">
    <property type="entry name" value="EF-Ts_dimer_sf"/>
</dbReference>
<dbReference type="InterPro" id="IPR001816">
    <property type="entry name" value="Transl_elong_EFTs/EF1B"/>
</dbReference>
<dbReference type="InterPro" id="IPR014039">
    <property type="entry name" value="Transl_elong_EFTs/EF1B_dimer"/>
</dbReference>
<dbReference type="InterPro" id="IPR009060">
    <property type="entry name" value="UBA-like_sf"/>
</dbReference>
<dbReference type="PANTHER" id="PTHR11741">
    <property type="entry name" value="ELONGATION FACTOR TS"/>
    <property type="match status" value="1"/>
</dbReference>
<dbReference type="PANTHER" id="PTHR11741:SF0">
    <property type="entry name" value="ELONGATION FACTOR TS, MITOCHONDRIAL"/>
    <property type="match status" value="1"/>
</dbReference>
<dbReference type="Pfam" id="PF00889">
    <property type="entry name" value="EF_TS"/>
    <property type="match status" value="1"/>
</dbReference>
<dbReference type="SUPFAM" id="SSF54713">
    <property type="entry name" value="Elongation factor Ts (EF-Ts), dimerisation domain"/>
    <property type="match status" value="1"/>
</dbReference>
<dbReference type="SUPFAM" id="SSF46934">
    <property type="entry name" value="UBA-like"/>
    <property type="match status" value="1"/>
</dbReference>
<gene>
    <name evidence="1" type="primary">TSF1</name>
    <name type="ordered locus">CNC03280</name>
</gene>
<name>EFTS_CRYNJ</name>
<comment type="function">
    <text evidence="1">Associates with the EF-Tu.GDP complex and induces the exchange of GDP to GTP. It remains bound to the aminoacyl-tRNA.EF-Tu.GTP complex up to the GTP hydrolysis stage on the ribosome.</text>
</comment>
<comment type="subcellular location">
    <subcellularLocation>
        <location evidence="1">Mitochondrion</location>
    </subcellularLocation>
</comment>
<comment type="similarity">
    <text evidence="1">Belongs to the EF-Ts family.</text>
</comment>
<reference key="1">
    <citation type="journal article" date="2005" name="Science">
        <title>The genome of the basidiomycetous yeast and human pathogen Cryptococcus neoformans.</title>
        <authorList>
            <person name="Loftus B.J."/>
            <person name="Fung E."/>
            <person name="Roncaglia P."/>
            <person name="Rowley D."/>
            <person name="Amedeo P."/>
            <person name="Bruno D."/>
            <person name="Vamathevan J."/>
            <person name="Miranda M."/>
            <person name="Anderson I.J."/>
            <person name="Fraser J.A."/>
            <person name="Allen J.E."/>
            <person name="Bosdet I.E."/>
            <person name="Brent M.R."/>
            <person name="Chiu R."/>
            <person name="Doering T.L."/>
            <person name="Donlin M.J."/>
            <person name="D'Souza C.A."/>
            <person name="Fox D.S."/>
            <person name="Grinberg V."/>
            <person name="Fu J."/>
            <person name="Fukushima M."/>
            <person name="Haas B.J."/>
            <person name="Huang J.C."/>
            <person name="Janbon G."/>
            <person name="Jones S.J.M."/>
            <person name="Koo H.L."/>
            <person name="Krzywinski M.I."/>
            <person name="Kwon-Chung K.J."/>
            <person name="Lengeler K.B."/>
            <person name="Maiti R."/>
            <person name="Marra M.A."/>
            <person name="Marra R.E."/>
            <person name="Mathewson C.A."/>
            <person name="Mitchell T.G."/>
            <person name="Pertea M."/>
            <person name="Riggs F.R."/>
            <person name="Salzberg S.L."/>
            <person name="Schein J.E."/>
            <person name="Shvartsbeyn A."/>
            <person name="Shin H."/>
            <person name="Shumway M."/>
            <person name="Specht C.A."/>
            <person name="Suh B.B."/>
            <person name="Tenney A."/>
            <person name="Utterback T.R."/>
            <person name="Wickes B.L."/>
            <person name="Wortman J.R."/>
            <person name="Wye N.H."/>
            <person name="Kronstad J.W."/>
            <person name="Lodge J.K."/>
            <person name="Heitman J."/>
            <person name="Davis R.W."/>
            <person name="Fraser C.M."/>
            <person name="Hyman R.W."/>
        </authorList>
    </citation>
    <scope>NUCLEOTIDE SEQUENCE [LARGE SCALE GENOMIC DNA]</scope>
    <source>
        <strain>JEC21 / ATCC MYA-565</strain>
    </source>
</reference>
<feature type="transit peptide" description="Mitochondrion" evidence="1">
    <location>
        <begin position="1"/>
        <end position="29"/>
    </location>
</feature>
<feature type="chain" id="PRO_0000402344" description="Elongation factor Ts, mitochondrial">
    <location>
        <begin position="30"/>
        <end position="370"/>
    </location>
</feature>
<keyword id="KW-0251">Elongation factor</keyword>
<keyword id="KW-0496">Mitochondrion</keyword>
<keyword id="KW-0648">Protein biosynthesis</keyword>
<keyword id="KW-1185">Reference proteome</keyword>
<keyword id="KW-0809">Transit peptide</keyword>
<evidence type="ECO:0000255" key="1">
    <source>
        <dbReference type="HAMAP-Rule" id="MF_03135"/>
    </source>
</evidence>
<proteinExistence type="inferred from homology"/>
<organism>
    <name type="scientific">Cryptococcus neoformans var. neoformans serotype D (strain JEC21 / ATCC MYA-565)</name>
    <name type="common">Filobasidiella neoformans</name>
    <dbReference type="NCBI Taxonomy" id="214684"/>
    <lineage>
        <taxon>Eukaryota</taxon>
        <taxon>Fungi</taxon>
        <taxon>Dikarya</taxon>
        <taxon>Basidiomycota</taxon>
        <taxon>Agaricomycotina</taxon>
        <taxon>Tremellomycetes</taxon>
        <taxon>Tremellales</taxon>
        <taxon>Cryptococcaceae</taxon>
        <taxon>Cryptococcus</taxon>
        <taxon>Cryptococcus neoformans species complex</taxon>
    </lineage>
</organism>